<evidence type="ECO:0000255" key="1"/>
<evidence type="ECO:0000256" key="2">
    <source>
        <dbReference type="SAM" id="MobiDB-lite"/>
    </source>
</evidence>
<evidence type="ECO:0000305" key="3"/>
<proteinExistence type="inferred from homology"/>
<reference key="1">
    <citation type="journal article" date="1989" name="Plant Mol. Biol.">
        <title>The legumin gene family: structure and evolutionary implications of Vicia faba B-type genes and pseudogenes.</title>
        <authorList>
            <person name="Heim U."/>
            <person name="Schubert R."/>
            <person name="Baeumlein H."/>
            <person name="Wobus U."/>
        </authorList>
    </citation>
    <scope>NUCLEOTIDE SEQUENCE [GENOMIC DNA]</scope>
    <source>
        <strain>cv. Fribo</strain>
        <tissue>Leaf</tissue>
    </source>
</reference>
<protein>
    <recommendedName>
        <fullName>Legumin type B</fullName>
    </recommendedName>
    <component>
        <recommendedName>
            <fullName>Legumin type B alpha chain</fullName>
        </recommendedName>
        <alternativeName>
            <fullName>Legumin type B acidic chain</fullName>
        </alternativeName>
    </component>
    <component>
        <recommendedName>
            <fullName>Legumin type B beta chain</fullName>
        </recommendedName>
        <alternativeName>
            <fullName>Legumin type B basic chain</fullName>
        </alternativeName>
    </component>
</protein>
<comment type="function">
    <text>This protein found in the seeds of many leguminous and non-leguminous plants is the source of sulfur-containing amino acids in seed meals.</text>
</comment>
<comment type="subunit">
    <text>Hexamer; each subunit is composed of an acidic and a basic chain derived from a single precursor and linked by a disulfide bond.</text>
</comment>
<comment type="similarity">
    <text evidence="3">Belongs to the 11S seed storage protein (globulins) family.</text>
</comment>
<accession>P16080</accession>
<sequence length="335" mass="37828">GIPYWTYNNGDEPLVAISLLDTSNIANQLDSTPRVFYLGGNPEVEFPETQEEQQERHQQKHSLPVGRRGGQHQQEEESEEQKDGNSVLSGFSSEFLAQTFNTEEDTAKRLRSPRDKRNQIVRVEGGLRIINPEGQQEEEEQEEEEKQRSEQGRNGLEETICSLKIRENIAQPARADLYNPRAGSISTANSLTLPILRYLRLSAEYVRLYRNGIYAPHWNINANSLLYVIRGEGRVRIVNSQGNAVFDNKVRKGQLVVVPQNFVVAEQAGEEEGLEYLVFKTNDRAAVSHVQQVFRATPADVLANAFGLRQRQVTELKLSGNRGPLVHPHSQSQSN</sequence>
<name>LEGB7_VICFA</name>
<feature type="chain" id="PRO_0000032082" description="Legumin type B alpha chain">
    <location>
        <begin position="1" status="less than"/>
        <end position="154"/>
    </location>
</feature>
<feature type="chain" id="PRO_0000032083" description="Legumin type B beta chain">
    <location>
        <begin position="155"/>
        <end position="335"/>
    </location>
</feature>
<feature type="domain" description="Cupin type-1" evidence="1">
    <location>
        <begin position="167"/>
        <end position="314"/>
    </location>
</feature>
<feature type="region of interest" description="Disordered" evidence="2">
    <location>
        <begin position="47"/>
        <end position="87"/>
    </location>
</feature>
<feature type="region of interest" description="Disordered" evidence="2">
    <location>
        <begin position="102"/>
        <end position="155"/>
    </location>
</feature>
<feature type="compositionally biased region" description="Basic and acidic residues" evidence="2">
    <location>
        <begin position="105"/>
        <end position="118"/>
    </location>
</feature>
<feature type="compositionally biased region" description="Acidic residues" evidence="2">
    <location>
        <begin position="135"/>
        <end position="144"/>
    </location>
</feature>
<feature type="disulfide bond" description="Interchain (between alpha and beta chains)" evidence="1">
    <location>
        <begin status="unknown"/>
        <end position="161"/>
    </location>
</feature>
<feature type="non-terminal residue">
    <location>
        <position position="1"/>
    </location>
</feature>
<gene>
    <name type="primary">LEB7</name>
</gene>
<keyword id="KW-1015">Disulfide bond</keyword>
<keyword id="KW-0708">Seed storage protein</keyword>
<keyword id="KW-0758">Storage protein</keyword>
<dbReference type="EMBL" id="X14241">
    <property type="protein sequence ID" value="CAA32457.1"/>
    <property type="molecule type" value="Genomic_DNA"/>
</dbReference>
<dbReference type="PIR" id="S07578">
    <property type="entry name" value="S07578"/>
</dbReference>
<dbReference type="SMR" id="P16080"/>
<dbReference type="GO" id="GO:0045735">
    <property type="term" value="F:nutrient reservoir activity"/>
    <property type="evidence" value="ECO:0007669"/>
    <property type="project" value="UniProtKB-KW"/>
</dbReference>
<dbReference type="CDD" id="cd02243">
    <property type="entry name" value="cupin_11S_legumin_C"/>
    <property type="match status" value="1"/>
</dbReference>
<dbReference type="FunFam" id="2.60.120.10:FF:000073">
    <property type="entry name" value="Glycinin G1"/>
    <property type="match status" value="1"/>
</dbReference>
<dbReference type="Gene3D" id="2.60.120.10">
    <property type="entry name" value="Jelly Rolls"/>
    <property type="match status" value="2"/>
</dbReference>
<dbReference type="InterPro" id="IPR022379">
    <property type="entry name" value="11S_seedstore_CS"/>
</dbReference>
<dbReference type="InterPro" id="IPR006044">
    <property type="entry name" value="11S_seedstore_pln"/>
</dbReference>
<dbReference type="InterPro" id="IPR006045">
    <property type="entry name" value="Cupin_1"/>
</dbReference>
<dbReference type="InterPro" id="IPR014710">
    <property type="entry name" value="RmlC-like_jellyroll"/>
</dbReference>
<dbReference type="InterPro" id="IPR011051">
    <property type="entry name" value="RmlC_Cupin_sf"/>
</dbReference>
<dbReference type="InterPro" id="IPR050253">
    <property type="entry name" value="Seed_Storage-Functional"/>
</dbReference>
<dbReference type="PANTHER" id="PTHR31189:SF63">
    <property type="entry name" value="GLYCININ G5"/>
    <property type="match status" value="1"/>
</dbReference>
<dbReference type="PANTHER" id="PTHR31189">
    <property type="entry name" value="OS03G0336100 PROTEIN-RELATED"/>
    <property type="match status" value="1"/>
</dbReference>
<dbReference type="Pfam" id="PF00190">
    <property type="entry name" value="Cupin_1"/>
    <property type="match status" value="1"/>
</dbReference>
<dbReference type="PRINTS" id="PR00439">
    <property type="entry name" value="11SGLOBULIN"/>
</dbReference>
<dbReference type="SMART" id="SM00835">
    <property type="entry name" value="Cupin_1"/>
    <property type="match status" value="1"/>
</dbReference>
<dbReference type="SUPFAM" id="SSF51182">
    <property type="entry name" value="RmlC-like cupins"/>
    <property type="match status" value="1"/>
</dbReference>
<dbReference type="PROSITE" id="PS00305">
    <property type="entry name" value="11S_SEED_STORAGE"/>
    <property type="match status" value="1"/>
</dbReference>
<organism>
    <name type="scientific">Vicia faba</name>
    <name type="common">Broad bean</name>
    <name type="synonym">Faba vulgaris</name>
    <dbReference type="NCBI Taxonomy" id="3906"/>
    <lineage>
        <taxon>Eukaryota</taxon>
        <taxon>Viridiplantae</taxon>
        <taxon>Streptophyta</taxon>
        <taxon>Embryophyta</taxon>
        <taxon>Tracheophyta</taxon>
        <taxon>Spermatophyta</taxon>
        <taxon>Magnoliopsida</taxon>
        <taxon>eudicotyledons</taxon>
        <taxon>Gunneridae</taxon>
        <taxon>Pentapetalae</taxon>
        <taxon>rosids</taxon>
        <taxon>fabids</taxon>
        <taxon>Fabales</taxon>
        <taxon>Fabaceae</taxon>
        <taxon>Papilionoideae</taxon>
        <taxon>50 kb inversion clade</taxon>
        <taxon>NPAAA clade</taxon>
        <taxon>Hologalegina</taxon>
        <taxon>IRL clade</taxon>
        <taxon>Fabeae</taxon>
        <taxon>Vicia</taxon>
    </lineage>
</organism>